<keyword id="KW-0002">3D-structure</keyword>
<keyword id="KW-0903">Direct protein sequencing</keyword>
<keyword id="KW-1185">Reference proteome</keyword>
<keyword id="KW-0687">Ribonucleoprotein</keyword>
<keyword id="KW-0689">Ribosomal protein</keyword>
<gene>
    <name evidence="1 4" type="primary">rpmA</name>
    <name type="ordered locus">SAOUHSC_01755</name>
</gene>
<evidence type="ECO:0000255" key="1">
    <source>
        <dbReference type="HAMAP-Rule" id="MF_00539"/>
    </source>
</evidence>
<evidence type="ECO:0000269" key="2">
    <source>
    </source>
</evidence>
<evidence type="ECO:0000269" key="3">
    <source>
    </source>
</evidence>
<evidence type="ECO:0000303" key="4">
    <source ref="1"/>
</evidence>
<evidence type="ECO:0000305" key="5"/>
<evidence type="ECO:0007744" key="6">
    <source>
        <dbReference type="PDB" id="7JVS"/>
    </source>
</evidence>
<evidence type="ECO:0007829" key="7">
    <source>
        <dbReference type="PDB" id="6DDG"/>
    </source>
</evidence>
<evidence type="ECO:0007829" key="8">
    <source>
        <dbReference type="PDB" id="6WQQ"/>
    </source>
</evidence>
<evidence type="ECO:0007829" key="9">
    <source>
        <dbReference type="PDB" id="7ASM"/>
    </source>
</evidence>
<evidence type="ECO:0007829" key="10">
    <source>
        <dbReference type="PDB" id="7JVS"/>
    </source>
</evidence>
<comment type="subunit">
    <text evidence="2">Part of the 50S ribosomal subunit (PubMed:25388641). A mutant Prp protease unable to cleave bL27 copurifies with its substrate (PubMed:25388641).</text>
</comment>
<comment type="PTM">
    <text evidence="2">The N-terminus is cleaved by ribosomal processing protease Prp (PubMed:25388641). Uncleaved protein can be incorporated into pre-50S ribosome subunits (PubMed:25388641). Cleavage of the N-terminus of bL27 is essential for growth; it cannot be replaced by a 'pre-cleaved' or non-cleavable form (PubMed:28187498).</text>
</comment>
<comment type="disruption phenotype">
    <text evidence="3">Essential, it cannot be disrupted (PubMed:28187498).</text>
</comment>
<comment type="similarity">
    <text evidence="1">Belongs to the bacterial ribosomal protein bL27 family.</text>
</comment>
<organism>
    <name type="scientific">Staphylococcus aureus (strain NCTC 8325 / PS 47)</name>
    <dbReference type="NCBI Taxonomy" id="93061"/>
    <lineage>
        <taxon>Bacteria</taxon>
        <taxon>Bacillati</taxon>
        <taxon>Bacillota</taxon>
        <taxon>Bacilli</taxon>
        <taxon>Bacillales</taxon>
        <taxon>Staphylococcaceae</taxon>
        <taxon>Staphylococcus</taxon>
    </lineage>
</organism>
<dbReference type="EMBL" id="CP000253">
    <property type="protein sequence ID" value="ABD30824.1"/>
    <property type="molecule type" value="Genomic_DNA"/>
</dbReference>
<dbReference type="RefSeq" id="WP_000916187.1">
    <property type="nucleotide sequence ID" value="NZ_LS483365.1"/>
</dbReference>
<dbReference type="RefSeq" id="YP_500260.1">
    <property type="nucleotide sequence ID" value="NC_007795.1"/>
</dbReference>
<dbReference type="PDB" id="4WCE">
    <property type="method" value="X-ray"/>
    <property type="resolution" value="3.53 A"/>
    <property type="chains" value="T=1-94"/>
</dbReference>
<dbReference type="PDB" id="4WF9">
    <property type="method" value="X-ray"/>
    <property type="resolution" value="3.43 A"/>
    <property type="chains" value="T=1-94"/>
</dbReference>
<dbReference type="PDB" id="4WFA">
    <property type="method" value="X-ray"/>
    <property type="resolution" value="3.39 A"/>
    <property type="chains" value="T=1-94"/>
</dbReference>
<dbReference type="PDB" id="4WFB">
    <property type="method" value="X-ray"/>
    <property type="resolution" value="3.43 A"/>
    <property type="chains" value="T=1-94"/>
</dbReference>
<dbReference type="PDB" id="5HKV">
    <property type="method" value="X-ray"/>
    <property type="resolution" value="3.66 A"/>
    <property type="chains" value="T=1-94"/>
</dbReference>
<dbReference type="PDB" id="5HL7">
    <property type="method" value="X-ray"/>
    <property type="resolution" value="3.55 A"/>
    <property type="chains" value="T=1-94"/>
</dbReference>
<dbReference type="PDB" id="5LI0">
    <property type="method" value="EM"/>
    <property type="resolution" value="3.80 A"/>
    <property type="chains" value="Z=12-93"/>
</dbReference>
<dbReference type="PDB" id="5ND8">
    <property type="method" value="EM"/>
    <property type="resolution" value="3.70 A"/>
    <property type="chains" value="Z=1-94"/>
</dbReference>
<dbReference type="PDB" id="5ND9">
    <property type="method" value="EM"/>
    <property type="resolution" value="3.70 A"/>
    <property type="chains" value="Z=1-94"/>
</dbReference>
<dbReference type="PDB" id="5NRG">
    <property type="method" value="X-ray"/>
    <property type="resolution" value="3.44 A"/>
    <property type="chains" value="T=1-94"/>
</dbReference>
<dbReference type="PDB" id="5TCU">
    <property type="method" value="EM"/>
    <property type="resolution" value="3.90 A"/>
    <property type="chains" value="L9=12-93"/>
</dbReference>
<dbReference type="PDB" id="6DDD">
    <property type="method" value="EM"/>
    <property type="resolution" value="3.10 A"/>
    <property type="chains" value="I=10-94"/>
</dbReference>
<dbReference type="PDB" id="6DDG">
    <property type="method" value="EM"/>
    <property type="resolution" value="3.10 A"/>
    <property type="chains" value="I=10-94"/>
</dbReference>
<dbReference type="PDB" id="6HMA">
    <property type="method" value="EM"/>
    <property type="resolution" value="2.65 A"/>
    <property type="chains" value="U=15-93"/>
</dbReference>
<dbReference type="PDB" id="6SJ6">
    <property type="method" value="EM"/>
    <property type="resolution" value="3.23 A"/>
    <property type="chains" value="Z=1-94"/>
</dbReference>
<dbReference type="PDB" id="6WQN">
    <property type="method" value="EM"/>
    <property type="resolution" value="2.90 A"/>
    <property type="chains" value="I=10-94"/>
</dbReference>
<dbReference type="PDB" id="6WQQ">
    <property type="method" value="EM"/>
    <property type="resolution" value="3.10 A"/>
    <property type="chains" value="I=10-94"/>
</dbReference>
<dbReference type="PDB" id="6WRS">
    <property type="method" value="EM"/>
    <property type="resolution" value="3.20 A"/>
    <property type="chains" value="I=10-94"/>
</dbReference>
<dbReference type="PDB" id="6WRU">
    <property type="method" value="EM"/>
    <property type="resolution" value="3.10 A"/>
    <property type="chains" value="I=10-94"/>
</dbReference>
<dbReference type="PDB" id="6YEF">
    <property type="method" value="EM"/>
    <property type="resolution" value="3.20 A"/>
    <property type="chains" value="Z=1-94"/>
</dbReference>
<dbReference type="PDB" id="7ASM">
    <property type="method" value="EM"/>
    <property type="resolution" value="2.48 A"/>
    <property type="chains" value="U=15-93"/>
</dbReference>
<dbReference type="PDB" id="7ASN">
    <property type="method" value="EM"/>
    <property type="resolution" value="2.73 A"/>
    <property type="chains" value="a=15-93"/>
</dbReference>
<dbReference type="PDB" id="7JVS">
    <property type="method" value="X-ray"/>
    <property type="resolution" value="2.30 A"/>
    <property type="chains" value="C=3-13"/>
</dbReference>
<dbReference type="PDB" id="7NHL">
    <property type="method" value="EM"/>
    <property type="resolution" value="3.10 A"/>
    <property type="chains" value="Z=1-94"/>
</dbReference>
<dbReference type="PDB" id="7NHM">
    <property type="method" value="EM"/>
    <property type="resolution" value="3.10 A"/>
    <property type="chains" value="Z=1-94"/>
</dbReference>
<dbReference type="PDB" id="7TTU">
    <property type="method" value="EM"/>
    <property type="resolution" value="3.00 A"/>
    <property type="chains" value="I=1-94"/>
</dbReference>
<dbReference type="PDB" id="7TTW">
    <property type="method" value="EM"/>
    <property type="resolution" value="2.90 A"/>
    <property type="chains" value="I=1-94"/>
</dbReference>
<dbReference type="PDB" id="8P2F">
    <property type="method" value="EM"/>
    <property type="resolution" value="2.44 A"/>
    <property type="chains" value="Z=1-94"/>
</dbReference>
<dbReference type="PDB" id="8P2G">
    <property type="method" value="EM"/>
    <property type="resolution" value="2.02 A"/>
    <property type="chains" value="Z=1-94"/>
</dbReference>
<dbReference type="PDB" id="8P2H">
    <property type="method" value="EM"/>
    <property type="resolution" value="2.49 A"/>
    <property type="chains" value="Z=1-94"/>
</dbReference>
<dbReference type="PDBsum" id="4WCE"/>
<dbReference type="PDBsum" id="4WF9"/>
<dbReference type="PDBsum" id="4WFA"/>
<dbReference type="PDBsum" id="4WFB"/>
<dbReference type="PDBsum" id="5HKV"/>
<dbReference type="PDBsum" id="5HL7"/>
<dbReference type="PDBsum" id="5LI0"/>
<dbReference type="PDBsum" id="5ND8"/>
<dbReference type="PDBsum" id="5ND9"/>
<dbReference type="PDBsum" id="5NRG"/>
<dbReference type="PDBsum" id="5TCU"/>
<dbReference type="PDBsum" id="6DDD"/>
<dbReference type="PDBsum" id="6DDG"/>
<dbReference type="PDBsum" id="6HMA"/>
<dbReference type="PDBsum" id="6SJ6"/>
<dbReference type="PDBsum" id="6WQN"/>
<dbReference type="PDBsum" id="6WQQ"/>
<dbReference type="PDBsum" id="6WRS"/>
<dbReference type="PDBsum" id="6WRU"/>
<dbReference type="PDBsum" id="6YEF"/>
<dbReference type="PDBsum" id="7ASM"/>
<dbReference type="PDBsum" id="7ASN"/>
<dbReference type="PDBsum" id="7JVS"/>
<dbReference type="PDBsum" id="7NHL"/>
<dbReference type="PDBsum" id="7NHM"/>
<dbReference type="PDBsum" id="7TTU"/>
<dbReference type="PDBsum" id="7TTW"/>
<dbReference type="PDBsum" id="8P2F"/>
<dbReference type="PDBsum" id="8P2G"/>
<dbReference type="PDBsum" id="8P2H"/>
<dbReference type="EMDB" id="EMD-10212"/>
<dbReference type="EMDB" id="EMD-10791"/>
<dbReference type="EMDB" id="EMD-12332"/>
<dbReference type="EMDB" id="EMD-12333"/>
<dbReference type="EMDB" id="EMD-17363"/>
<dbReference type="EMDB" id="EMD-17364"/>
<dbReference type="EMDB" id="EMD-17365"/>
<dbReference type="EMDB" id="EMD-3624"/>
<dbReference type="EMDB" id="EMD-3625"/>
<dbReference type="EMDB" id="EMD-4050"/>
<dbReference type="EMDB" id="EMD-8402"/>
<dbReference type="SMR" id="Q2FXT0"/>
<dbReference type="IntAct" id="Q2FXT0">
    <property type="interactions" value="1"/>
</dbReference>
<dbReference type="STRING" id="93061.SAOUHSC_01755"/>
<dbReference type="PaxDb" id="1280-SAXN108_1672"/>
<dbReference type="GeneID" id="3920553"/>
<dbReference type="GeneID" id="98346013"/>
<dbReference type="KEGG" id="sao:SAOUHSC_01755"/>
<dbReference type="PATRIC" id="fig|93061.5.peg.1598"/>
<dbReference type="eggNOG" id="COG0211">
    <property type="taxonomic scope" value="Bacteria"/>
</dbReference>
<dbReference type="HOGENOM" id="CLU_095424_4_0_9"/>
<dbReference type="OrthoDB" id="9803474at2"/>
<dbReference type="EvolutionaryTrace" id="Q2FXT0"/>
<dbReference type="PRO" id="PR:Q2FXT0"/>
<dbReference type="Proteomes" id="UP000008816">
    <property type="component" value="Chromosome"/>
</dbReference>
<dbReference type="GO" id="GO:0022625">
    <property type="term" value="C:cytosolic large ribosomal subunit"/>
    <property type="evidence" value="ECO:0000318"/>
    <property type="project" value="GO_Central"/>
</dbReference>
<dbReference type="GO" id="GO:0003735">
    <property type="term" value="F:structural constituent of ribosome"/>
    <property type="evidence" value="ECO:0000318"/>
    <property type="project" value="GO_Central"/>
</dbReference>
<dbReference type="GO" id="GO:0006412">
    <property type="term" value="P:translation"/>
    <property type="evidence" value="ECO:0007669"/>
    <property type="project" value="UniProtKB-UniRule"/>
</dbReference>
<dbReference type="FunFam" id="2.40.50.100:FF:000004">
    <property type="entry name" value="50S ribosomal protein L27"/>
    <property type="match status" value="1"/>
</dbReference>
<dbReference type="Gene3D" id="2.40.50.100">
    <property type="match status" value="1"/>
</dbReference>
<dbReference type="HAMAP" id="MF_00539">
    <property type="entry name" value="Ribosomal_bL27"/>
    <property type="match status" value="1"/>
</dbReference>
<dbReference type="InterPro" id="IPR001684">
    <property type="entry name" value="Ribosomal_bL27"/>
</dbReference>
<dbReference type="InterPro" id="IPR018261">
    <property type="entry name" value="Ribosomal_bL27_CS"/>
</dbReference>
<dbReference type="NCBIfam" id="TIGR00062">
    <property type="entry name" value="L27"/>
    <property type="match status" value="1"/>
</dbReference>
<dbReference type="PANTHER" id="PTHR15893:SF0">
    <property type="entry name" value="LARGE RIBOSOMAL SUBUNIT PROTEIN BL27M"/>
    <property type="match status" value="1"/>
</dbReference>
<dbReference type="PANTHER" id="PTHR15893">
    <property type="entry name" value="RIBOSOMAL PROTEIN L27"/>
    <property type="match status" value="1"/>
</dbReference>
<dbReference type="Pfam" id="PF01016">
    <property type="entry name" value="Ribosomal_L27"/>
    <property type="match status" value="1"/>
</dbReference>
<dbReference type="PRINTS" id="PR00063">
    <property type="entry name" value="RIBOSOMALL27"/>
</dbReference>
<dbReference type="SUPFAM" id="SSF110324">
    <property type="entry name" value="Ribosomal L27 protein-like"/>
    <property type="match status" value="1"/>
</dbReference>
<dbReference type="PROSITE" id="PS00831">
    <property type="entry name" value="RIBOSOMAL_L27"/>
    <property type="match status" value="1"/>
</dbReference>
<name>RL27_STAA8</name>
<proteinExistence type="evidence at protein level"/>
<protein>
    <recommendedName>
        <fullName evidence="1">Large ribosomal subunit protein bL27</fullName>
    </recommendedName>
    <alternativeName>
        <fullName evidence="5">50S ribosomal protein L27</fullName>
    </alternativeName>
</protein>
<reference key="1">
    <citation type="book" date="2006" name="Gram positive pathogens, 2nd edition">
        <title>The Staphylococcus aureus NCTC 8325 genome.</title>
        <editorList>
            <person name="Fischetti V."/>
            <person name="Novick R."/>
            <person name="Ferretti J."/>
            <person name="Portnoy D."/>
            <person name="Rood J."/>
        </editorList>
        <authorList>
            <person name="Gillaspy A.F."/>
            <person name="Worrell V."/>
            <person name="Orvis J."/>
            <person name="Roe B.A."/>
            <person name="Dyer D.W."/>
            <person name="Iandolo J.J."/>
        </authorList>
    </citation>
    <scope>NUCLEOTIDE SEQUENCE [LARGE SCALE GENOMIC DNA]</scope>
    <source>
        <strain>NCTC 8325 / PS 47</strain>
    </source>
</reference>
<reference key="2">
    <citation type="journal article" date="2015" name="Mol. Microbiol.">
        <title>Specific N-terminal cleavage of ribosomal protein L27 in Staphylococcus aureus and related bacteria.</title>
        <authorList>
            <person name="Wall E.A."/>
            <person name="Caufield J.H."/>
            <person name="Lyons C.E."/>
            <person name="Manning K.A."/>
            <person name="Dokland T."/>
            <person name="Christie G.E."/>
        </authorList>
    </citation>
    <scope>PROTEIN SEQUENCE OF 10-13</scope>
    <scope>PROTEOLYTIC CLEAVAGE BY PRP</scope>
    <source>
        <strain>RN4220</strain>
    </source>
</reference>
<reference key="3">
    <citation type="journal article" date="2017" name="Mol. Microbiol.">
        <title>Structural modeling and functional analysis of the essential ribosomal processing protease Prp from Staphylococcus aureus.</title>
        <authorList>
            <person name="Wall E.A."/>
            <person name="Johnson A.L."/>
            <person name="Peterson D.L."/>
            <person name="Christie G.E."/>
        </authorList>
    </citation>
    <scope>DISRUPTION PHENOTYPE</scope>
    <scope>MUTAGENESIS OF 2-LEU--PHE-9 AND 8-PHE-PHE-9</scope>
    <source>
        <strain>RN4220</strain>
    </source>
</reference>
<reference evidence="6" key="4">
    <citation type="submission" date="2020-08" db="PDB data bank">
        <title>Crystal Structure of an Essential Ribosomal Processing Protease Prp from S. aureus in complex with a Substrate Peptide.</title>
        <authorList>
            <person name="Wright H.T."/>
            <person name="Peterson D."/>
            <person name="Christie G."/>
        </authorList>
    </citation>
    <scope>X-RAY CRYSTALLOGRAPHY (2.30 ANGSTROMS) OF 3-13 IN COMPLEX WITH PPRP</scope>
</reference>
<accession>Q2FXT0</accession>
<sequence>MLKLNLQFFASKKGVSSTKNGRDSESKRLGAKRADGQFVTGGSILYRQRGTKIYPGENVGRGGDDTLFAKIDGVVKFERKGRDKKQVSVYAVAE</sequence>
<feature type="propeptide" id="PRO_0000459829" evidence="2">
    <location>
        <begin position="1"/>
        <end position="9"/>
    </location>
</feature>
<feature type="chain" id="PRO_1000017619" description="Large ribosomal subunit protein bL27">
    <location>
        <begin position="10"/>
        <end position="94"/>
    </location>
</feature>
<feature type="mutagenesis site" description="No growth, cannot replace wild-type protein." evidence="2">
    <location>
        <begin position="2"/>
        <end position="9"/>
    </location>
</feature>
<feature type="mutagenesis site" description="No growth, cannot replace wild-type protein." evidence="2">
    <original>FF</original>
    <variation>AA</variation>
    <location>
        <begin position="8"/>
        <end position="9"/>
    </location>
</feature>
<feature type="turn" evidence="10">
    <location>
        <begin position="6"/>
        <end position="9"/>
    </location>
</feature>
<feature type="strand" evidence="8">
    <location>
        <begin position="30"/>
        <end position="33"/>
    </location>
</feature>
<feature type="strand" evidence="9">
    <location>
        <begin position="44"/>
        <end position="47"/>
    </location>
</feature>
<feature type="strand" evidence="9">
    <location>
        <begin position="52"/>
        <end position="55"/>
    </location>
</feature>
<feature type="strand" evidence="9">
    <location>
        <begin position="59"/>
        <end position="61"/>
    </location>
</feature>
<feature type="helix" evidence="7">
    <location>
        <begin position="63"/>
        <end position="65"/>
    </location>
</feature>
<feature type="strand" evidence="9">
    <location>
        <begin position="67"/>
        <end position="79"/>
    </location>
</feature>
<feature type="strand" evidence="9">
    <location>
        <begin position="81"/>
        <end position="83"/>
    </location>
</feature>
<feature type="strand" evidence="9">
    <location>
        <begin position="85"/>
        <end position="90"/>
    </location>
</feature>